<dbReference type="EC" id="1.14.11.67" evidence="6"/>
<dbReference type="EMBL" id="Z49619">
    <property type="protein sequence ID" value="CAA89649.1"/>
    <property type="molecule type" value="Genomic_DNA"/>
</dbReference>
<dbReference type="EMBL" id="Z49620">
    <property type="protein sequence ID" value="CAA89651.1"/>
    <property type="molecule type" value="Genomic_DNA"/>
</dbReference>
<dbReference type="EMBL" id="BK006943">
    <property type="protein sequence ID" value="DAA08904.1"/>
    <property type="molecule type" value="Genomic_DNA"/>
</dbReference>
<dbReference type="PIR" id="S57142">
    <property type="entry name" value="S57142"/>
</dbReference>
<dbReference type="RefSeq" id="NP_012653.1">
    <property type="nucleotide sequence ID" value="NM_001181777.1"/>
</dbReference>
<dbReference type="SMR" id="P47156"/>
<dbReference type="BioGRID" id="33875">
    <property type="interactions" value="170"/>
</dbReference>
<dbReference type="DIP" id="DIP-4835N"/>
<dbReference type="FunCoup" id="P47156">
    <property type="interactions" value="68"/>
</dbReference>
<dbReference type="IntAct" id="P47156">
    <property type="interactions" value="3"/>
</dbReference>
<dbReference type="MINT" id="P47156"/>
<dbReference type="STRING" id="4932.YJR119C"/>
<dbReference type="iPTMnet" id="P47156"/>
<dbReference type="PaxDb" id="4932-YJR119C"/>
<dbReference type="PeptideAtlas" id="P47156"/>
<dbReference type="EnsemblFungi" id="YJR119C_mRNA">
    <property type="protein sequence ID" value="YJR119C"/>
    <property type="gene ID" value="YJR119C"/>
</dbReference>
<dbReference type="GeneID" id="853583"/>
<dbReference type="KEGG" id="sce:YJR119C"/>
<dbReference type="AGR" id="SGD:S000003880"/>
<dbReference type="SGD" id="S000003880">
    <property type="gene designation" value="JHD2"/>
</dbReference>
<dbReference type="VEuPathDB" id="FungiDB:YJR119C"/>
<dbReference type="eggNOG" id="KOG1246">
    <property type="taxonomic scope" value="Eukaryota"/>
</dbReference>
<dbReference type="GeneTree" id="ENSGT00940000168915"/>
<dbReference type="HOGENOM" id="CLU_000991_4_0_1"/>
<dbReference type="InParanoid" id="P47156"/>
<dbReference type="OMA" id="TFPKCYH"/>
<dbReference type="OrthoDB" id="1678912at2759"/>
<dbReference type="BioCyc" id="YEAST:G3O-31740-MONOMER"/>
<dbReference type="BRENDA" id="1.14.11.67">
    <property type="organism ID" value="984"/>
</dbReference>
<dbReference type="Reactome" id="R-SCE-3214842">
    <property type="pathway name" value="HDMs demethylate histones"/>
</dbReference>
<dbReference type="BioGRID-ORCS" id="853583">
    <property type="hits" value="0 hits in 10 CRISPR screens"/>
</dbReference>
<dbReference type="PRO" id="PR:P47156"/>
<dbReference type="Proteomes" id="UP000002311">
    <property type="component" value="Chromosome X"/>
</dbReference>
<dbReference type="RNAct" id="P47156">
    <property type="molecule type" value="protein"/>
</dbReference>
<dbReference type="GO" id="GO:0000785">
    <property type="term" value="C:chromatin"/>
    <property type="evidence" value="ECO:0000318"/>
    <property type="project" value="GO_Central"/>
</dbReference>
<dbReference type="GO" id="GO:0005737">
    <property type="term" value="C:cytoplasm"/>
    <property type="evidence" value="ECO:0007005"/>
    <property type="project" value="SGD"/>
</dbReference>
<dbReference type="GO" id="GO:0005634">
    <property type="term" value="C:nucleus"/>
    <property type="evidence" value="ECO:0007005"/>
    <property type="project" value="SGD"/>
</dbReference>
<dbReference type="GO" id="GO:0032453">
    <property type="term" value="F:histone H3K4 demethylase activity"/>
    <property type="evidence" value="ECO:0000314"/>
    <property type="project" value="SGD"/>
</dbReference>
<dbReference type="GO" id="GO:0034647">
    <property type="term" value="F:histone H3K4me/H3K4me2/H3K4me3 demethylase activity"/>
    <property type="evidence" value="ECO:0000318"/>
    <property type="project" value="GO_Central"/>
</dbReference>
<dbReference type="GO" id="GO:0008270">
    <property type="term" value="F:zinc ion binding"/>
    <property type="evidence" value="ECO:0007669"/>
    <property type="project" value="UniProtKB-KW"/>
</dbReference>
<dbReference type="GO" id="GO:0071041">
    <property type="term" value="P:antisense RNA transcript catabolic process"/>
    <property type="evidence" value="ECO:0000315"/>
    <property type="project" value="SGD"/>
</dbReference>
<dbReference type="GO" id="GO:0006338">
    <property type="term" value="P:chromatin remodeling"/>
    <property type="evidence" value="ECO:0000318"/>
    <property type="project" value="GO_Central"/>
</dbReference>
<dbReference type="GO" id="GO:0000278">
    <property type="term" value="P:mitotic cell cycle"/>
    <property type="evidence" value="ECO:0000315"/>
    <property type="project" value="SGD"/>
</dbReference>
<dbReference type="GO" id="GO:0000122">
    <property type="term" value="P:negative regulation of transcription by RNA polymerase II"/>
    <property type="evidence" value="ECO:0000315"/>
    <property type="project" value="SGD"/>
</dbReference>
<dbReference type="GO" id="GO:0045944">
    <property type="term" value="P:positive regulation of transcription by RNA polymerase II"/>
    <property type="evidence" value="ECO:0000315"/>
    <property type="project" value="SGD"/>
</dbReference>
<dbReference type="GO" id="GO:0000183">
    <property type="term" value="P:rDNA heterochromatin formation"/>
    <property type="evidence" value="ECO:0000315"/>
    <property type="project" value="SGD"/>
</dbReference>
<dbReference type="GO" id="GO:1902275">
    <property type="term" value="P:regulation of chromatin organization"/>
    <property type="evidence" value="ECO:0000315"/>
    <property type="project" value="SGD"/>
</dbReference>
<dbReference type="GO" id="GO:0060623">
    <property type="term" value="P:regulation of chromosome condensation"/>
    <property type="evidence" value="ECO:0000315"/>
    <property type="project" value="SGD"/>
</dbReference>
<dbReference type="GO" id="GO:0006355">
    <property type="term" value="P:regulation of DNA-templated transcription"/>
    <property type="evidence" value="ECO:0000318"/>
    <property type="project" value="GO_Central"/>
</dbReference>
<dbReference type="GO" id="GO:0043934">
    <property type="term" value="P:sporulation"/>
    <property type="evidence" value="ECO:0000315"/>
    <property type="project" value="SGD"/>
</dbReference>
<dbReference type="CDD" id="cd15544">
    <property type="entry name" value="PHD_BAZ1A_like"/>
    <property type="match status" value="1"/>
</dbReference>
<dbReference type="FunFam" id="2.60.120.650:FF:000055">
    <property type="entry name" value="Jhd2p"/>
    <property type="match status" value="1"/>
</dbReference>
<dbReference type="Gene3D" id="2.60.120.650">
    <property type="entry name" value="Cupin"/>
    <property type="match status" value="2"/>
</dbReference>
<dbReference type="Gene3D" id="3.30.40.10">
    <property type="entry name" value="Zinc/RING finger domain, C3HC4 (zinc finger)"/>
    <property type="match status" value="1"/>
</dbReference>
<dbReference type="InterPro" id="IPR003347">
    <property type="entry name" value="JmjC_dom"/>
</dbReference>
<dbReference type="InterPro" id="IPR003349">
    <property type="entry name" value="JmjN"/>
</dbReference>
<dbReference type="InterPro" id="IPR019786">
    <property type="entry name" value="Zinc_finger_PHD-type_CS"/>
</dbReference>
<dbReference type="InterPro" id="IPR011011">
    <property type="entry name" value="Znf_FYVE_PHD"/>
</dbReference>
<dbReference type="InterPro" id="IPR001965">
    <property type="entry name" value="Znf_PHD"/>
</dbReference>
<dbReference type="InterPro" id="IPR019787">
    <property type="entry name" value="Znf_PHD-finger"/>
</dbReference>
<dbReference type="InterPro" id="IPR013083">
    <property type="entry name" value="Znf_RING/FYVE/PHD"/>
</dbReference>
<dbReference type="PANTHER" id="PTHR10694">
    <property type="entry name" value="LYSINE-SPECIFIC DEMETHYLASE"/>
    <property type="match status" value="1"/>
</dbReference>
<dbReference type="PANTHER" id="PTHR10694:SF33">
    <property type="entry name" value="LYSINE-SPECIFIC DEMETHYLASE 5"/>
    <property type="match status" value="1"/>
</dbReference>
<dbReference type="Pfam" id="PF02373">
    <property type="entry name" value="JmjC"/>
    <property type="match status" value="1"/>
</dbReference>
<dbReference type="Pfam" id="PF02375">
    <property type="entry name" value="JmjN"/>
    <property type="match status" value="1"/>
</dbReference>
<dbReference type="Pfam" id="PF00628">
    <property type="entry name" value="PHD"/>
    <property type="match status" value="1"/>
</dbReference>
<dbReference type="SMART" id="SM00558">
    <property type="entry name" value="JmjC"/>
    <property type="match status" value="1"/>
</dbReference>
<dbReference type="SMART" id="SM00545">
    <property type="entry name" value="JmjN"/>
    <property type="match status" value="1"/>
</dbReference>
<dbReference type="SMART" id="SM00249">
    <property type="entry name" value="PHD"/>
    <property type="match status" value="1"/>
</dbReference>
<dbReference type="SUPFAM" id="SSF51197">
    <property type="entry name" value="Clavaminate synthase-like"/>
    <property type="match status" value="1"/>
</dbReference>
<dbReference type="SUPFAM" id="SSF57903">
    <property type="entry name" value="FYVE/PHD zinc finger"/>
    <property type="match status" value="1"/>
</dbReference>
<dbReference type="PROSITE" id="PS51184">
    <property type="entry name" value="JMJC"/>
    <property type="match status" value="1"/>
</dbReference>
<dbReference type="PROSITE" id="PS51183">
    <property type="entry name" value="JMJN"/>
    <property type="match status" value="1"/>
</dbReference>
<dbReference type="PROSITE" id="PS01359">
    <property type="entry name" value="ZF_PHD_1"/>
    <property type="match status" value="1"/>
</dbReference>
<dbReference type="PROSITE" id="PS50016">
    <property type="entry name" value="ZF_PHD_2"/>
    <property type="match status" value="1"/>
</dbReference>
<sequence>MEEIPALYPTEQEFKNPIDYLSNPHIKRLGVRYGMVKVVPPNGFCPPLSIDMENFTFQPRIQNLENLDLKNRCRLFFMKQLNNFKRSVKDPSKLILREPYTIVEYSDSTHASEILKKKVYFYDVFSELIKDNRTLTDTTQSFRRKLKFRDISQLRGDISLWRTISKKFNVPIGLLKEIFEKYIASYYIFLHSLNENVHTALHADQYPKSLLSDDEDDFDLGPDSNSGSDFEEDDDDACIVCRKTNDPKRTILCDSCDKPFHIYCLSPPLERVPSGDWICNTCIVGNGYYGFTQDTHDYSLPEFQEYCKRQNSRLLPARKLSIDELEEMFWSLVTKNRRSSLTTVKYGADIHNELPGQITGFPTREFIPKNINGDELIDYLKYCDHPMNLTNLPMAHNSLLPLFKRNISGMTIPWIYIGSLFSTFCWHMEDQYTLSANYQHEGDPKVWYSIPESGCTKFNDLLNDMSPDLFIKQPDLLHQLVTLISPYDPNFKKSGIPVYKAVQKPNEYIITFPKCYHAGFNTGYNFNEAVNFTIDFWLPYGFGAITDYKLTQKACVFDMFDLMINVLDKYNKDTLLFNDAFVRQCYSSLIVFYNTELKRIRKIQAIVPRTTLLEVHTDPNDEDEEYDIFCSQCKTICSIAFVLRKNNYDSIRTYKRHKKNHLSIRQWNELSTTDSKVSILCTQDYLKSIQNLNNSDGEEPYIDDELYFTKSLKDIDSLIKQVGVKLDR</sequence>
<evidence type="ECO:0000250" key="1"/>
<evidence type="ECO:0000255" key="2">
    <source>
        <dbReference type="PROSITE-ProRule" id="PRU00146"/>
    </source>
</evidence>
<evidence type="ECO:0000255" key="3">
    <source>
        <dbReference type="PROSITE-ProRule" id="PRU00537"/>
    </source>
</evidence>
<evidence type="ECO:0000255" key="4">
    <source>
        <dbReference type="PROSITE-ProRule" id="PRU00538"/>
    </source>
</evidence>
<evidence type="ECO:0000269" key="5">
    <source>
    </source>
</evidence>
<evidence type="ECO:0000269" key="6">
    <source>
    </source>
</evidence>
<evidence type="ECO:0000305" key="7"/>
<reference key="1">
    <citation type="journal article" date="1996" name="EMBO J.">
        <title>Complete nucleotide sequence of Saccharomyces cerevisiae chromosome X.</title>
        <authorList>
            <person name="Galibert F."/>
            <person name="Alexandraki D."/>
            <person name="Baur A."/>
            <person name="Boles E."/>
            <person name="Chalwatzis N."/>
            <person name="Chuat J.-C."/>
            <person name="Coster F."/>
            <person name="Cziepluch C."/>
            <person name="de Haan M."/>
            <person name="Domdey H."/>
            <person name="Durand P."/>
            <person name="Entian K.-D."/>
            <person name="Gatius M."/>
            <person name="Goffeau A."/>
            <person name="Grivell L.A."/>
            <person name="Hennemann A."/>
            <person name="Herbert C.J."/>
            <person name="Heumann K."/>
            <person name="Hilger F."/>
            <person name="Hollenberg C.P."/>
            <person name="Huang M.-E."/>
            <person name="Jacq C."/>
            <person name="Jauniaux J.-C."/>
            <person name="Katsoulou C."/>
            <person name="Kirchrath L."/>
            <person name="Kleine K."/>
            <person name="Kordes E."/>
            <person name="Koetter P."/>
            <person name="Liebl S."/>
            <person name="Louis E.J."/>
            <person name="Manus V."/>
            <person name="Mewes H.-W."/>
            <person name="Miosga T."/>
            <person name="Obermaier B."/>
            <person name="Perea J."/>
            <person name="Pohl T.M."/>
            <person name="Portetelle D."/>
            <person name="Pujol A."/>
            <person name="Purnelle B."/>
            <person name="Ramezani Rad M."/>
            <person name="Rasmussen S.W."/>
            <person name="Rose M."/>
            <person name="Rossau R."/>
            <person name="Schaaff-Gerstenschlaeger I."/>
            <person name="Smits P.H.M."/>
            <person name="Scarcez T."/>
            <person name="Soriano N."/>
            <person name="To Van D."/>
            <person name="Tzermia M."/>
            <person name="Van Broekhoven A."/>
            <person name="Vandenbol M."/>
            <person name="Wedler H."/>
            <person name="von Wettstein D."/>
            <person name="Wambutt R."/>
            <person name="Zagulski M."/>
            <person name="Zollner A."/>
            <person name="Karpfinger-Hartl L."/>
        </authorList>
    </citation>
    <scope>NUCLEOTIDE SEQUENCE [LARGE SCALE GENOMIC DNA]</scope>
    <source>
        <strain>ATCC 204508 / S288c</strain>
    </source>
</reference>
<reference key="2">
    <citation type="journal article" date="2014" name="G3 (Bethesda)">
        <title>The reference genome sequence of Saccharomyces cerevisiae: Then and now.</title>
        <authorList>
            <person name="Engel S.R."/>
            <person name="Dietrich F.S."/>
            <person name="Fisk D.G."/>
            <person name="Binkley G."/>
            <person name="Balakrishnan R."/>
            <person name="Costanzo M.C."/>
            <person name="Dwight S.S."/>
            <person name="Hitz B.C."/>
            <person name="Karra K."/>
            <person name="Nash R.S."/>
            <person name="Weng S."/>
            <person name="Wong E.D."/>
            <person name="Lloyd P."/>
            <person name="Skrzypek M.S."/>
            <person name="Miyasato S.R."/>
            <person name="Simison M."/>
            <person name="Cherry J.M."/>
        </authorList>
    </citation>
    <scope>GENOME REANNOTATION</scope>
    <source>
        <strain>ATCC 204508 / S288c</strain>
    </source>
</reference>
<reference key="3">
    <citation type="journal article" date="2003" name="Nature">
        <title>Global analysis of protein expression in yeast.</title>
        <authorList>
            <person name="Ghaemmaghami S."/>
            <person name="Huh W.-K."/>
            <person name="Bower K."/>
            <person name="Howson R.W."/>
            <person name="Belle A."/>
            <person name="Dephoure N."/>
            <person name="O'Shea E.K."/>
            <person name="Weissman J.S."/>
        </authorList>
    </citation>
    <scope>LEVEL OF PROTEIN EXPRESSION [LARGE SCALE ANALYSIS]</scope>
</reference>
<reference key="4">
    <citation type="journal article" date="2007" name="Nat. Struct. Mol. Biol.">
        <title>Demethylation of trimethylated histone H3 Lys4 in vivo by JARID1 JmjC proteins.</title>
        <authorList>
            <person name="Seward D.J."/>
            <person name="Cubberley G."/>
            <person name="Kim S."/>
            <person name="Schonewald M."/>
            <person name="Zhang L."/>
            <person name="Tripet B."/>
            <person name="Bentley D.L."/>
        </authorList>
    </citation>
    <scope>FUNCTION</scope>
    <scope>CATALYTIC ACTIVITY</scope>
    <scope>MUTAGENESIS OF HIS-427</scope>
</reference>
<gene>
    <name type="primary">JHD2</name>
    <name type="ordered locus">YJR119C</name>
    <name type="ORF">J2035</name>
</gene>
<protein>
    <recommendedName>
        <fullName>Histone demethylase JHD2</fullName>
        <ecNumber evidence="6">1.14.11.67</ecNumber>
    </recommendedName>
    <alternativeName>
        <fullName>Jumonji/ARID domain-containing protein 2</fullName>
    </alternativeName>
    <alternativeName>
        <fullName evidence="7">[histone H3]-trimethyl-L-lysine(4) demethylase JHD2</fullName>
    </alternativeName>
</protein>
<organism>
    <name type="scientific">Saccharomyces cerevisiae (strain ATCC 204508 / S288c)</name>
    <name type="common">Baker's yeast</name>
    <dbReference type="NCBI Taxonomy" id="559292"/>
    <lineage>
        <taxon>Eukaryota</taxon>
        <taxon>Fungi</taxon>
        <taxon>Dikarya</taxon>
        <taxon>Ascomycota</taxon>
        <taxon>Saccharomycotina</taxon>
        <taxon>Saccharomycetes</taxon>
        <taxon>Saccharomycetales</taxon>
        <taxon>Saccharomycetaceae</taxon>
        <taxon>Saccharomyces</taxon>
    </lineage>
</organism>
<feature type="chain" id="PRO_0000203116" description="Histone demethylase JHD2">
    <location>
        <begin position="1"/>
        <end position="728"/>
    </location>
</feature>
<feature type="domain" description="JmjN" evidence="3">
    <location>
        <begin position="4"/>
        <end position="47"/>
    </location>
</feature>
<feature type="domain" description="JmjC" evidence="4">
    <location>
        <begin position="381"/>
        <end position="549"/>
    </location>
</feature>
<feature type="zinc finger region" description="PHD-type" evidence="2">
    <location>
        <begin position="235"/>
        <end position="285"/>
    </location>
</feature>
<feature type="binding site" evidence="7">
    <location>
        <position position="427"/>
    </location>
    <ligand>
        <name>Fe cation</name>
        <dbReference type="ChEBI" id="CHEBI:24875"/>
        <note>catalytic</note>
    </ligand>
</feature>
<feature type="binding site" evidence="4">
    <location>
        <position position="430"/>
    </location>
    <ligand>
        <name>Fe cation</name>
        <dbReference type="ChEBI" id="CHEBI:24875"/>
        <note>catalytic</note>
    </ligand>
</feature>
<feature type="binding site" evidence="4">
    <location>
        <position position="517"/>
    </location>
    <ligand>
        <name>Fe cation</name>
        <dbReference type="ChEBI" id="CHEBI:24875"/>
        <note>catalytic</note>
    </ligand>
</feature>
<feature type="mutagenesis site" description="Abolishes enzymatic activity." evidence="6">
    <original>H</original>
    <variation>A</variation>
    <location>
        <position position="427"/>
    </location>
</feature>
<accession>P47156</accession>
<accession>D6VWT8</accession>
<name>JHD2_YEAST</name>
<keyword id="KW-0156">Chromatin regulator</keyword>
<keyword id="KW-0223">Dioxygenase</keyword>
<keyword id="KW-0408">Iron</keyword>
<keyword id="KW-0479">Metal-binding</keyword>
<keyword id="KW-0539">Nucleus</keyword>
<keyword id="KW-0560">Oxidoreductase</keyword>
<keyword id="KW-1185">Reference proteome</keyword>
<keyword id="KW-0862">Zinc</keyword>
<keyword id="KW-0863">Zinc-finger</keyword>
<comment type="function">
    <text evidence="6">Histone demethylase that demethylates 'Lys-4' of histone H3, thereby playing a central role in histone code. Demethylates trimethylated H3 'Lys-4'.</text>
</comment>
<comment type="catalytic activity">
    <reaction evidence="6">
        <text>N(6),N(6),N(6)-trimethyl-L-lysyl(4)-[histone H3] + 3 2-oxoglutarate + 3 O2 = L-lysyl(4)-[histone H3] + 3 formaldehyde + 3 succinate + 3 CO2</text>
        <dbReference type="Rhea" id="RHEA:60208"/>
        <dbReference type="Rhea" id="RHEA-COMP:15537"/>
        <dbReference type="Rhea" id="RHEA-COMP:15547"/>
        <dbReference type="ChEBI" id="CHEBI:15379"/>
        <dbReference type="ChEBI" id="CHEBI:16526"/>
        <dbReference type="ChEBI" id="CHEBI:16810"/>
        <dbReference type="ChEBI" id="CHEBI:16842"/>
        <dbReference type="ChEBI" id="CHEBI:29969"/>
        <dbReference type="ChEBI" id="CHEBI:30031"/>
        <dbReference type="ChEBI" id="CHEBI:61961"/>
        <dbReference type="EC" id="1.14.11.67"/>
    </reaction>
</comment>
<comment type="cofactor">
    <cofactor evidence="1">
        <name>Fe(2+)</name>
        <dbReference type="ChEBI" id="CHEBI:29033"/>
    </cofactor>
    <text evidence="1">Binds 1 Fe(2+) ion per subunit.</text>
</comment>
<comment type="subcellular location">
    <subcellularLocation>
        <location evidence="3">Nucleus</location>
    </subcellularLocation>
</comment>
<comment type="domain">
    <text>The JmjC domain is required for enzymatic activity.</text>
</comment>
<comment type="miscellaneous">
    <text evidence="5">Present with 290 molecules/cell in log phase SD medium.</text>
</comment>
<comment type="similarity">
    <text evidence="7">Belongs to the JARID1 histone demethylase family.</text>
</comment>
<proteinExistence type="evidence at protein level"/>